<dbReference type="EMBL" id="Z29635">
    <property type="protein sequence ID" value="CAA82743.1"/>
    <property type="molecule type" value="Genomic_DNA"/>
</dbReference>
<dbReference type="PIR" id="C55578">
    <property type="entry name" value="C55578"/>
</dbReference>
<dbReference type="RefSeq" id="WP_015586133.1">
    <property type="nucleotide sequence ID" value="NZ_JOKB01000057.1"/>
</dbReference>
<dbReference type="RefSeq" id="YP_007878706.1">
    <property type="nucleotide sequence ID" value="NC_021080.1"/>
</dbReference>
<dbReference type="SMR" id="P46375"/>
<dbReference type="STRING" id="1443905.GCA_000761075_00038"/>
<dbReference type="eggNOG" id="COG3958">
    <property type="taxonomic scope" value="Bacteria"/>
</dbReference>
<dbReference type="GO" id="GO:0000287">
    <property type="term" value="F:magnesium ion binding"/>
    <property type="evidence" value="ECO:0007669"/>
    <property type="project" value="UniProtKB-ARBA"/>
</dbReference>
<dbReference type="CDD" id="cd07033">
    <property type="entry name" value="TPP_PYR_DXS_TK_like"/>
    <property type="match status" value="1"/>
</dbReference>
<dbReference type="Gene3D" id="3.40.50.920">
    <property type="match status" value="1"/>
</dbReference>
<dbReference type="Gene3D" id="3.40.50.970">
    <property type="match status" value="1"/>
</dbReference>
<dbReference type="InterPro" id="IPR051157">
    <property type="entry name" value="PDH/Transketolase"/>
</dbReference>
<dbReference type="InterPro" id="IPR029061">
    <property type="entry name" value="THDP-binding"/>
</dbReference>
<dbReference type="InterPro" id="IPR009014">
    <property type="entry name" value="Transketo_C/PFOR_II"/>
</dbReference>
<dbReference type="InterPro" id="IPR005475">
    <property type="entry name" value="Transketolase-like_Pyr-bd"/>
</dbReference>
<dbReference type="PANTHER" id="PTHR43825">
    <property type="entry name" value="PYRUVATE DEHYDROGENASE E1 COMPONENT"/>
    <property type="match status" value="1"/>
</dbReference>
<dbReference type="PANTHER" id="PTHR43825:SF1">
    <property type="entry name" value="TRANSKETOLASE-LIKE PYRIMIDINE-BINDING DOMAIN-CONTAINING PROTEIN"/>
    <property type="match status" value="1"/>
</dbReference>
<dbReference type="Pfam" id="PF02779">
    <property type="entry name" value="Transket_pyr"/>
    <property type="match status" value="1"/>
</dbReference>
<dbReference type="SMART" id="SM00861">
    <property type="entry name" value="Transket_pyr"/>
    <property type="match status" value="1"/>
</dbReference>
<dbReference type="SUPFAM" id="SSF52518">
    <property type="entry name" value="Thiamin diphosphate-binding fold (THDP-binding)"/>
    <property type="match status" value="1"/>
</dbReference>
<dbReference type="SUPFAM" id="SSF52922">
    <property type="entry name" value="TK C-terminal domain-like"/>
    <property type="match status" value="1"/>
</dbReference>
<evidence type="ECO:0000255" key="1"/>
<comment type="function">
    <text>The FAS-operon encodes genes involved in cytokinin production and in host plant fasciation (leafy gall).</text>
</comment>
<comment type="induction">
    <text>During the interaction with host plants.</text>
</comment>
<name>FAS3_RHOFA</name>
<sequence length="312" mass="33574">MNSADTQEPKSFNHTDMWTAFGTTMSGALETDPRAVVVLADIGAHLFKAAAIADPNRVINVGIREQLMMGVAGGLAMCGMRPVVHTVAAFLVERPLEQIKLNFAQQDVGAVLVSWGASYDLSEFAFSHFTPGDITVIDSMPNWTVHVPGHPQEAADLLLESLPGDGRVYLRLSSQVNRYPHAVRGTSFTPIKYGTRGVVLAVGPCLDAVLSATSMLDVTILYAATIRPFDATGLCAAVQAVNRPNVVLVEPYLAGTSAHQVSSSLVSHPHRLLSLGVRREMEDRHYGTPDDHDHIHGLDARSLSNSINSFLG</sequence>
<feature type="signal peptide" evidence="1">
    <location>
        <begin position="1"/>
        <end position="28"/>
    </location>
</feature>
<feature type="chain" id="PRO_0000021231" description="Uncharacterized 33.6 kDa protein in fasciation locus">
    <location>
        <begin position="29"/>
        <end position="312"/>
    </location>
</feature>
<geneLocation type="plasmid">
    <name>pFiD188</name>
</geneLocation>
<gene>
    <name type="primary">fas3</name>
</gene>
<proteinExistence type="evidence at transcript level"/>
<protein>
    <recommendedName>
        <fullName>Uncharacterized 33.6 kDa protein in fasciation locus</fullName>
    </recommendedName>
    <alternativeName>
        <fullName>ORF3</fullName>
    </alternativeName>
</protein>
<keyword id="KW-0614">Plasmid</keyword>
<keyword id="KW-0732">Signal</keyword>
<accession>P46375</accession>
<organism>
    <name type="scientific">Rhodococcoides fascians</name>
    <name type="common">Rhodococcus fascians</name>
    <dbReference type="NCBI Taxonomy" id="1828"/>
    <lineage>
        <taxon>Bacteria</taxon>
        <taxon>Bacillati</taxon>
        <taxon>Actinomycetota</taxon>
        <taxon>Actinomycetes</taxon>
        <taxon>Mycobacteriales</taxon>
        <taxon>Nocardiaceae</taxon>
        <taxon>Rhodococcoides</taxon>
    </lineage>
</organism>
<reference key="1">
    <citation type="journal article" date="1994" name="J. Bacteriol.">
        <title>The fas operon of Rhodococcus fascians encodes new genes required for efficient fasciation of host plants.</title>
        <authorList>
            <person name="Crespi M."/>
            <person name="Vereecke D."/>
            <person name="Temmerman W."/>
            <person name="van Montagu M."/>
            <person name="Desomer J."/>
        </authorList>
    </citation>
    <scope>NUCLEOTIDE SEQUENCE [GENOMIC DNA]</scope>
    <source>
        <strain>D188</strain>
    </source>
</reference>